<protein>
    <recommendedName>
        <fullName evidence="1">Pyrimidine-specific ribonucleoside hydrolase RihA</fullName>
        <ecNumber evidence="1">3.2.-.-</ecNumber>
    </recommendedName>
    <alternativeName>
        <fullName evidence="1">Cytidine/uridine-specific hydrolase</fullName>
    </alternativeName>
</protein>
<name>RIHA_SALG2</name>
<proteinExistence type="inferred from homology"/>
<gene>
    <name evidence="1" type="primary">rihA</name>
    <name type="ordered locus">SG0665</name>
</gene>
<organism>
    <name type="scientific">Salmonella gallinarum (strain 287/91 / NCTC 13346)</name>
    <dbReference type="NCBI Taxonomy" id="550538"/>
    <lineage>
        <taxon>Bacteria</taxon>
        <taxon>Pseudomonadati</taxon>
        <taxon>Pseudomonadota</taxon>
        <taxon>Gammaproteobacteria</taxon>
        <taxon>Enterobacterales</taxon>
        <taxon>Enterobacteriaceae</taxon>
        <taxon>Salmonella</taxon>
    </lineage>
</organism>
<feature type="chain" id="PRO_1000145801" description="Pyrimidine-specific ribonucleoside hydrolase RihA">
    <location>
        <begin position="1"/>
        <end position="311"/>
    </location>
</feature>
<feature type="active site" evidence="1">
    <location>
        <position position="240"/>
    </location>
</feature>
<comment type="function">
    <text evidence="1">Hydrolyzes cytidine or uridine to ribose and cytosine or uracil, respectively.</text>
</comment>
<comment type="similarity">
    <text evidence="1">Belongs to the IUNH family. RihA subfamily.</text>
</comment>
<dbReference type="EC" id="3.2.-.-" evidence="1"/>
<dbReference type="EMBL" id="AM933173">
    <property type="protein sequence ID" value="CAR36561.1"/>
    <property type="molecule type" value="Genomic_DNA"/>
</dbReference>
<dbReference type="RefSeq" id="WP_001207440.1">
    <property type="nucleotide sequence ID" value="NC_011274.1"/>
</dbReference>
<dbReference type="SMR" id="B5R809"/>
<dbReference type="KEGG" id="seg:SG0665"/>
<dbReference type="HOGENOM" id="CLU_036838_2_0_6"/>
<dbReference type="Proteomes" id="UP000008321">
    <property type="component" value="Chromosome"/>
</dbReference>
<dbReference type="GO" id="GO:0005829">
    <property type="term" value="C:cytosol"/>
    <property type="evidence" value="ECO:0007669"/>
    <property type="project" value="TreeGrafter"/>
</dbReference>
<dbReference type="GO" id="GO:0008477">
    <property type="term" value="F:purine nucleosidase activity"/>
    <property type="evidence" value="ECO:0007669"/>
    <property type="project" value="TreeGrafter"/>
</dbReference>
<dbReference type="GO" id="GO:0045437">
    <property type="term" value="F:uridine nucleosidase activity"/>
    <property type="evidence" value="ECO:0007669"/>
    <property type="project" value="InterPro"/>
</dbReference>
<dbReference type="GO" id="GO:0015949">
    <property type="term" value="P:nucleobase-containing small molecule interconversion"/>
    <property type="evidence" value="ECO:0007669"/>
    <property type="project" value="InterPro"/>
</dbReference>
<dbReference type="GO" id="GO:0006152">
    <property type="term" value="P:purine nucleoside catabolic process"/>
    <property type="evidence" value="ECO:0007669"/>
    <property type="project" value="TreeGrafter"/>
</dbReference>
<dbReference type="GO" id="GO:0006206">
    <property type="term" value="P:pyrimidine nucleobase metabolic process"/>
    <property type="evidence" value="ECO:0007669"/>
    <property type="project" value="UniProtKB-UniRule"/>
</dbReference>
<dbReference type="CDD" id="cd02651">
    <property type="entry name" value="nuc_hydro_IU_UC_XIUA"/>
    <property type="match status" value="1"/>
</dbReference>
<dbReference type="FunFam" id="3.90.245.10:FF:000001">
    <property type="entry name" value="Pyrimidine-specific ribonucleoside hydrolase RihA"/>
    <property type="match status" value="1"/>
</dbReference>
<dbReference type="Gene3D" id="3.90.245.10">
    <property type="entry name" value="Ribonucleoside hydrolase-like"/>
    <property type="match status" value="1"/>
</dbReference>
<dbReference type="HAMAP" id="MF_01431">
    <property type="entry name" value="Pyrim_hydro_RihA"/>
    <property type="match status" value="1"/>
</dbReference>
<dbReference type="InterPro" id="IPR015910">
    <property type="entry name" value="I/U_nuclsd_hydro_CS"/>
</dbReference>
<dbReference type="InterPro" id="IPR001910">
    <property type="entry name" value="Inosine/uridine_hydrolase_dom"/>
</dbReference>
<dbReference type="InterPro" id="IPR023186">
    <property type="entry name" value="IUNH"/>
</dbReference>
<dbReference type="InterPro" id="IPR022975">
    <property type="entry name" value="Pyrim_hydro_RihA"/>
</dbReference>
<dbReference type="InterPro" id="IPR036452">
    <property type="entry name" value="Ribo_hydro-like"/>
</dbReference>
<dbReference type="NCBIfam" id="NF007761">
    <property type="entry name" value="PRK10443.1"/>
    <property type="match status" value="1"/>
</dbReference>
<dbReference type="PANTHER" id="PTHR12304">
    <property type="entry name" value="INOSINE-URIDINE PREFERRING NUCLEOSIDE HYDROLASE"/>
    <property type="match status" value="1"/>
</dbReference>
<dbReference type="PANTHER" id="PTHR12304:SF4">
    <property type="entry name" value="URIDINE NUCLEOSIDASE"/>
    <property type="match status" value="1"/>
</dbReference>
<dbReference type="Pfam" id="PF01156">
    <property type="entry name" value="IU_nuc_hydro"/>
    <property type="match status" value="1"/>
</dbReference>
<dbReference type="SUPFAM" id="SSF53590">
    <property type="entry name" value="Nucleoside hydrolase"/>
    <property type="match status" value="1"/>
</dbReference>
<dbReference type="PROSITE" id="PS01247">
    <property type="entry name" value="IUNH"/>
    <property type="match status" value="1"/>
</dbReference>
<evidence type="ECO:0000255" key="1">
    <source>
        <dbReference type="HAMAP-Rule" id="MF_01431"/>
    </source>
</evidence>
<sequence>MALPIIIDCDPGHDDAIALVLALASPELEVKAITSSAGNQTPEKTLRNVLRMLTLLKRPDIPVAGGAVKPLMRELIIADNVHGESGLNGPALPEPSFAPQSGTAVELMAKTLRESAQPVTIVSTGPQTNVALLLNSHPELHTKIARIVIMGGAMALGNWTPAAEFNIYVDPEAAEIVFQSGIPVVMAGLDVTHKAQIHAADIERFRAIGNPISTIVAELLDFFMEYHKDEKWGFVGAPLHDPCTIAWLLKPEIFTTVERWVGVETKGKYTQGMTVVDYYFLTGNKPNATVMVDVDSQGFVDLLAERLQYYA</sequence>
<accession>B5R809</accession>
<reference key="1">
    <citation type="journal article" date="2008" name="Genome Res.">
        <title>Comparative genome analysis of Salmonella enteritidis PT4 and Salmonella gallinarum 287/91 provides insights into evolutionary and host adaptation pathways.</title>
        <authorList>
            <person name="Thomson N.R."/>
            <person name="Clayton D.J."/>
            <person name="Windhorst D."/>
            <person name="Vernikos G."/>
            <person name="Davidson S."/>
            <person name="Churcher C."/>
            <person name="Quail M.A."/>
            <person name="Stevens M."/>
            <person name="Jones M.A."/>
            <person name="Watson M."/>
            <person name="Barron A."/>
            <person name="Layton A."/>
            <person name="Pickard D."/>
            <person name="Kingsley R.A."/>
            <person name="Bignell A."/>
            <person name="Clark L."/>
            <person name="Harris B."/>
            <person name="Ormond D."/>
            <person name="Abdellah Z."/>
            <person name="Brooks K."/>
            <person name="Cherevach I."/>
            <person name="Chillingworth T."/>
            <person name="Woodward J."/>
            <person name="Norberczak H."/>
            <person name="Lord A."/>
            <person name="Arrowsmith C."/>
            <person name="Jagels K."/>
            <person name="Moule S."/>
            <person name="Mungall K."/>
            <person name="Saunders M."/>
            <person name="Whitehead S."/>
            <person name="Chabalgoity J.A."/>
            <person name="Maskell D."/>
            <person name="Humphreys T."/>
            <person name="Roberts M."/>
            <person name="Barrow P.A."/>
            <person name="Dougan G."/>
            <person name="Parkhill J."/>
        </authorList>
    </citation>
    <scope>NUCLEOTIDE SEQUENCE [LARGE SCALE GENOMIC DNA]</scope>
    <source>
        <strain>287/91 / NCTC 13346</strain>
    </source>
</reference>
<keyword id="KW-0326">Glycosidase</keyword>
<keyword id="KW-0378">Hydrolase</keyword>